<accession>B6JCW3</accession>
<accession>F8BU26</accession>
<comment type="function">
    <text evidence="1">Component of the sulfite reductase complex that catalyzes the 6-electron reduction of sulfite to sulfide. This is one of several activities required for the biosynthesis of L-cysteine from sulfate.</text>
</comment>
<comment type="catalytic activity">
    <reaction evidence="1">
        <text>hydrogen sulfide + 3 NADP(+) + 3 H2O = sulfite + 3 NADPH + 4 H(+)</text>
        <dbReference type="Rhea" id="RHEA:13801"/>
        <dbReference type="ChEBI" id="CHEBI:15377"/>
        <dbReference type="ChEBI" id="CHEBI:15378"/>
        <dbReference type="ChEBI" id="CHEBI:17359"/>
        <dbReference type="ChEBI" id="CHEBI:29919"/>
        <dbReference type="ChEBI" id="CHEBI:57783"/>
        <dbReference type="ChEBI" id="CHEBI:58349"/>
        <dbReference type="EC" id="1.8.1.2"/>
    </reaction>
</comment>
<comment type="cofactor">
    <cofactor evidence="1">
        <name>siroheme</name>
        <dbReference type="ChEBI" id="CHEBI:60052"/>
    </cofactor>
    <text evidence="1">Binds 1 siroheme per subunit.</text>
</comment>
<comment type="cofactor">
    <cofactor evidence="1">
        <name>[4Fe-4S] cluster</name>
        <dbReference type="ChEBI" id="CHEBI:49883"/>
    </cofactor>
    <text evidence="1">Binds 1 [4Fe-4S] cluster per subunit.</text>
</comment>
<comment type="pathway">
    <text evidence="1">Sulfur metabolism; hydrogen sulfide biosynthesis; hydrogen sulfide from sulfite (NADPH route): step 1/1.</text>
</comment>
<comment type="subunit">
    <text evidence="1">Alpha(8)-beta(8). The alpha component is a flavoprotein, the beta component is a hemoprotein.</text>
</comment>
<comment type="similarity">
    <text evidence="1">Belongs to the nitrite and sulfite reductase 4Fe-4S domain family.</text>
</comment>
<organism>
    <name type="scientific">Afipia carboxidovorans (strain ATCC 49405 / DSM 1227 / KCTC 32145 / OM5)</name>
    <name type="common">Oligotropha carboxidovorans</name>
    <dbReference type="NCBI Taxonomy" id="504832"/>
    <lineage>
        <taxon>Bacteria</taxon>
        <taxon>Pseudomonadati</taxon>
        <taxon>Pseudomonadota</taxon>
        <taxon>Alphaproteobacteria</taxon>
        <taxon>Hyphomicrobiales</taxon>
        <taxon>Nitrobacteraceae</taxon>
        <taxon>Afipia</taxon>
    </lineage>
</organism>
<gene>
    <name evidence="1" type="primary">cysI</name>
    <name type="ordered locus">OCAR_4548</name>
    <name type="ordered locus">OCA5_c33950</name>
</gene>
<feature type="chain" id="PRO_0000388508" description="Sulfite reductase [NADPH] hemoprotein beta-component">
    <location>
        <begin position="1"/>
        <end position="582"/>
    </location>
</feature>
<feature type="region of interest" description="Disordered" evidence="2">
    <location>
        <begin position="1"/>
        <end position="26"/>
    </location>
</feature>
<feature type="compositionally biased region" description="Basic and acidic residues" evidence="2">
    <location>
        <begin position="1"/>
        <end position="12"/>
    </location>
</feature>
<feature type="binding site" evidence="1">
    <location>
        <position position="447"/>
    </location>
    <ligand>
        <name>[4Fe-4S] cluster</name>
        <dbReference type="ChEBI" id="CHEBI:49883"/>
    </ligand>
</feature>
<feature type="binding site" evidence="1">
    <location>
        <position position="453"/>
    </location>
    <ligand>
        <name>[4Fe-4S] cluster</name>
        <dbReference type="ChEBI" id="CHEBI:49883"/>
    </ligand>
</feature>
<feature type="binding site" evidence="1">
    <location>
        <position position="492"/>
    </location>
    <ligand>
        <name>[4Fe-4S] cluster</name>
        <dbReference type="ChEBI" id="CHEBI:49883"/>
    </ligand>
</feature>
<feature type="binding site" evidence="1">
    <location>
        <position position="496"/>
    </location>
    <ligand>
        <name>[4Fe-4S] cluster</name>
        <dbReference type="ChEBI" id="CHEBI:49883"/>
    </ligand>
</feature>
<feature type="binding site" description="axial binding residue" evidence="1">
    <location>
        <position position="496"/>
    </location>
    <ligand>
        <name>siroheme</name>
        <dbReference type="ChEBI" id="CHEBI:60052"/>
    </ligand>
    <ligandPart>
        <name>Fe</name>
        <dbReference type="ChEBI" id="CHEBI:18248"/>
    </ligandPart>
</feature>
<protein>
    <recommendedName>
        <fullName evidence="1">Sulfite reductase [NADPH] hemoprotein beta-component</fullName>
        <shortName evidence="1">SiR-HP</shortName>
        <shortName evidence="1">SiRHP</shortName>
        <ecNumber evidence="1">1.8.1.2</ecNumber>
    </recommendedName>
</protein>
<keyword id="KW-0004">4Fe-4S</keyword>
<keyword id="KW-0028">Amino-acid biosynthesis</keyword>
<keyword id="KW-0198">Cysteine biosynthesis</keyword>
<keyword id="KW-0349">Heme</keyword>
<keyword id="KW-0408">Iron</keyword>
<keyword id="KW-0411">Iron-sulfur</keyword>
<keyword id="KW-0479">Metal-binding</keyword>
<keyword id="KW-0521">NADP</keyword>
<keyword id="KW-0560">Oxidoreductase</keyword>
<keyword id="KW-1185">Reference proteome</keyword>
<proteinExistence type="inferred from homology"/>
<sequence length="582" mass="65147">MDLKVKVDRSRDVSQPLDKLGPDETLKANSDQLRGTIAQSLADPITLAVDPSDNKLMKFHGIYQQDDRDIRDERRRQKLEAAYSFMARVRLPGGVCSTSQWLKLDELGRAYAGNTLRLTTRQTFQLHRVLKHHLRPALQGLREVVLDTKAACGDDTRGVMATVNPLVSKVHADVYALAKQASEHALHRTGAYREIWYEEERDPSTVKSAPDGSEEPFYGRTYMPRKFKIGFAVPPSNDIDVYAQDLGFIAIVKRGKLAGFNVAIGGGLGRTDQAPKTYPRLASVIGYVGVDKLFQTIDAVMSVQRDYGDRVDRLHARFKYTIDDKGLDWIKAEIERRLGFELAPAALYTFTSNSDPLGWVKGEDGHWHCTLFIQNGRVINHPGQPLMDGLREIARVHKGHFRITPNQNLIIADIAPEDRPAIEEVMKEYGLDAFETRSQLRLNSMACVALPTCGLAMAESERYLPDLISKIEPLLERYGLTDEPITIRMTGCPNGCARPYVAEIALTGRAPGKYNLYLGGGFHGERLNKMYLENVGESAILDALDKVLGHFARERTPGEHFGDFAIRAGYVAEVKEGRYFND</sequence>
<reference key="1">
    <citation type="journal article" date="2008" name="J. Bacteriol.">
        <title>Genome sequence of the chemolithoautotrophic bacterium Oligotropha carboxidovorans OM5T.</title>
        <authorList>
            <person name="Paul D."/>
            <person name="Bridges S."/>
            <person name="Burgess S.C."/>
            <person name="Dandass Y."/>
            <person name="Lawrence M.L."/>
        </authorList>
    </citation>
    <scope>NUCLEOTIDE SEQUENCE [LARGE SCALE GENOMIC DNA]</scope>
    <source>
        <strain>ATCC 49405 / DSM 1227 / KCTC 32145 / OM5</strain>
    </source>
</reference>
<reference key="2">
    <citation type="journal article" date="2011" name="J. Bacteriol.">
        <title>Complete genome sequences of the chemolithoautotrophic Oligotropha carboxidovorans strains OM4 and OM5.</title>
        <authorList>
            <person name="Volland S."/>
            <person name="Rachinger M."/>
            <person name="Strittmatter A."/>
            <person name="Daniel R."/>
            <person name="Gottschalk G."/>
            <person name="Meyer O."/>
        </authorList>
    </citation>
    <scope>NUCLEOTIDE SEQUENCE [LARGE SCALE GENOMIC DNA]</scope>
    <source>
        <strain>ATCC 49405 / DSM 1227 / KCTC 32145 / OM5</strain>
    </source>
</reference>
<name>CYSI_AFIC5</name>
<evidence type="ECO:0000255" key="1">
    <source>
        <dbReference type="HAMAP-Rule" id="MF_01540"/>
    </source>
</evidence>
<evidence type="ECO:0000256" key="2">
    <source>
        <dbReference type="SAM" id="MobiDB-lite"/>
    </source>
</evidence>
<dbReference type="EC" id="1.8.1.2" evidence="1"/>
<dbReference type="EMBL" id="CP001196">
    <property type="protein sequence ID" value="ACI91693.1"/>
    <property type="molecule type" value="Genomic_DNA"/>
</dbReference>
<dbReference type="EMBL" id="CP002826">
    <property type="protein sequence ID" value="AEI08068.1"/>
    <property type="molecule type" value="Genomic_DNA"/>
</dbReference>
<dbReference type="RefSeq" id="WP_012561724.1">
    <property type="nucleotide sequence ID" value="NC_015684.1"/>
</dbReference>
<dbReference type="SMR" id="B6JCW3"/>
<dbReference type="STRING" id="504832.OCA5_c33950"/>
<dbReference type="KEGG" id="oca:OCAR_4548"/>
<dbReference type="KEGG" id="ocg:OCA5_c33950"/>
<dbReference type="PATRIC" id="fig|504832.7.peg.3566"/>
<dbReference type="eggNOG" id="COG0155">
    <property type="taxonomic scope" value="Bacteria"/>
</dbReference>
<dbReference type="HOGENOM" id="CLU_001975_3_2_5"/>
<dbReference type="OrthoDB" id="9803707at2"/>
<dbReference type="UniPathway" id="UPA00140">
    <property type="reaction ID" value="UER00207"/>
</dbReference>
<dbReference type="Proteomes" id="UP000007730">
    <property type="component" value="Chromosome"/>
</dbReference>
<dbReference type="GO" id="GO:0009337">
    <property type="term" value="C:sulfite reductase complex (NADPH)"/>
    <property type="evidence" value="ECO:0007669"/>
    <property type="project" value="InterPro"/>
</dbReference>
<dbReference type="GO" id="GO:0051539">
    <property type="term" value="F:4 iron, 4 sulfur cluster binding"/>
    <property type="evidence" value="ECO:0007669"/>
    <property type="project" value="UniProtKB-KW"/>
</dbReference>
<dbReference type="GO" id="GO:0020037">
    <property type="term" value="F:heme binding"/>
    <property type="evidence" value="ECO:0007669"/>
    <property type="project" value="InterPro"/>
</dbReference>
<dbReference type="GO" id="GO:0046872">
    <property type="term" value="F:metal ion binding"/>
    <property type="evidence" value="ECO:0007669"/>
    <property type="project" value="UniProtKB-KW"/>
</dbReference>
<dbReference type="GO" id="GO:0050661">
    <property type="term" value="F:NADP binding"/>
    <property type="evidence" value="ECO:0007669"/>
    <property type="project" value="InterPro"/>
</dbReference>
<dbReference type="GO" id="GO:0050311">
    <property type="term" value="F:sulfite reductase (ferredoxin) activity"/>
    <property type="evidence" value="ECO:0007669"/>
    <property type="project" value="TreeGrafter"/>
</dbReference>
<dbReference type="GO" id="GO:0004783">
    <property type="term" value="F:sulfite reductase (NADPH) activity"/>
    <property type="evidence" value="ECO:0007669"/>
    <property type="project" value="UniProtKB-UniRule"/>
</dbReference>
<dbReference type="GO" id="GO:0019344">
    <property type="term" value="P:cysteine biosynthetic process"/>
    <property type="evidence" value="ECO:0007669"/>
    <property type="project" value="UniProtKB-KW"/>
</dbReference>
<dbReference type="GO" id="GO:0070814">
    <property type="term" value="P:hydrogen sulfide biosynthetic process"/>
    <property type="evidence" value="ECO:0007669"/>
    <property type="project" value="UniProtKB-UniRule"/>
</dbReference>
<dbReference type="GO" id="GO:0000103">
    <property type="term" value="P:sulfate assimilation"/>
    <property type="evidence" value="ECO:0007669"/>
    <property type="project" value="UniProtKB-UniRule"/>
</dbReference>
<dbReference type="FunFam" id="3.30.413.10:FF:000003">
    <property type="entry name" value="Sulfite reductase [NADPH] hemoprotein beta-component"/>
    <property type="match status" value="1"/>
</dbReference>
<dbReference type="Gene3D" id="3.30.413.10">
    <property type="entry name" value="Sulfite Reductase Hemoprotein, domain 1"/>
    <property type="match status" value="2"/>
</dbReference>
<dbReference type="HAMAP" id="MF_01540">
    <property type="entry name" value="CysI"/>
    <property type="match status" value="1"/>
</dbReference>
<dbReference type="InterPro" id="IPR011786">
    <property type="entry name" value="CysI"/>
</dbReference>
<dbReference type="InterPro" id="IPR005117">
    <property type="entry name" value="NiRdtase/SiRdtase_haem-b_fer"/>
</dbReference>
<dbReference type="InterPro" id="IPR036136">
    <property type="entry name" value="Nit/Sulf_reduc_fer-like_dom_sf"/>
</dbReference>
<dbReference type="InterPro" id="IPR006067">
    <property type="entry name" value="NO2/SO3_Rdtase_4Fe4S_dom"/>
</dbReference>
<dbReference type="InterPro" id="IPR045169">
    <property type="entry name" value="NO2/SO3_Rdtase_4Fe4S_prot"/>
</dbReference>
<dbReference type="InterPro" id="IPR045854">
    <property type="entry name" value="NO2/SO3_Rdtase_4Fe4S_sf"/>
</dbReference>
<dbReference type="InterPro" id="IPR006066">
    <property type="entry name" value="NO2/SO3_Rdtase_FeS/sirohaem_BS"/>
</dbReference>
<dbReference type="NCBIfam" id="TIGR02041">
    <property type="entry name" value="CysI"/>
    <property type="match status" value="1"/>
</dbReference>
<dbReference type="NCBIfam" id="NF010029">
    <property type="entry name" value="PRK13504.1"/>
    <property type="match status" value="1"/>
</dbReference>
<dbReference type="PANTHER" id="PTHR11493:SF47">
    <property type="entry name" value="SULFITE REDUCTASE [NADPH] SUBUNIT BETA"/>
    <property type="match status" value="1"/>
</dbReference>
<dbReference type="PANTHER" id="PTHR11493">
    <property type="entry name" value="SULFITE REDUCTASE [NADPH] SUBUNIT BETA-RELATED"/>
    <property type="match status" value="1"/>
</dbReference>
<dbReference type="Pfam" id="PF01077">
    <property type="entry name" value="NIR_SIR"/>
    <property type="match status" value="1"/>
</dbReference>
<dbReference type="Pfam" id="PF03460">
    <property type="entry name" value="NIR_SIR_ferr"/>
    <property type="match status" value="2"/>
</dbReference>
<dbReference type="PRINTS" id="PR00397">
    <property type="entry name" value="SIROHAEM"/>
</dbReference>
<dbReference type="SUPFAM" id="SSF56014">
    <property type="entry name" value="Nitrite and sulphite reductase 4Fe-4S domain-like"/>
    <property type="match status" value="2"/>
</dbReference>
<dbReference type="SUPFAM" id="SSF55124">
    <property type="entry name" value="Nitrite/Sulfite reductase N-terminal domain-like"/>
    <property type="match status" value="2"/>
</dbReference>
<dbReference type="PROSITE" id="PS00365">
    <property type="entry name" value="NIR_SIR"/>
    <property type="match status" value="1"/>
</dbReference>